<comment type="function">
    <text evidence="2">Acts as a sulfur carrier required for molybdopterin biosynthesis. Component of the molybdopterin synthase complex that catalyzes the conversion of precursor Z into molybdopterin by mediating the incorporation of 2 sulfur atoms into precursor Z to generate a dithiolene group. In the complex, serves as sulfur donor by being thiocarboxylated (-COSH) at its C-terminus by MOCS3. After interaction with Mocs2B, the sulfur is then transferred to precursor Z to form molybdopterin.</text>
</comment>
<comment type="pathway">
    <text evidence="2">Cofactor biosynthesis; molybdopterin biosynthesis.</text>
</comment>
<comment type="subunit">
    <text evidence="2">Heterotetramer; composed of 2 small (Mocs2A) and 2 large (Mocs2B) subunits.</text>
</comment>
<comment type="subcellular location">
    <subcellularLocation>
        <location evidence="2">Cytoplasm</location>
    </subcellularLocation>
</comment>
<comment type="PTM">
    <text evidence="2">C-terminal thiocarboxylation occurs in 2 steps, it is first acyl-adenylated (-COAMP) via the hesA/moeB/thiF part of MOCS3, then thiocarboxylated (-COSH) via the rhodanese domain of MOCS3.</text>
</comment>
<comment type="miscellaneous">
    <text>This protein is produced by a bicistronic gene which also produces the large subunit (Mocs2B).</text>
</comment>
<comment type="similarity">
    <text evidence="2">Belongs to the MoaD family. MOCS2A subfamily.</text>
</comment>
<proteinExistence type="inferred from homology"/>
<name>MOC2A_DROAN</name>
<accession>B3M269</accession>
<gene>
    <name evidence="1" type="primary">Mocs2A</name>
    <name evidence="2" type="synonym">Mocs2</name>
    <name type="ORF">GF17097</name>
</gene>
<evidence type="ECO:0000250" key="1">
    <source>
        <dbReference type="UniProtKB" id="P0C919"/>
    </source>
</evidence>
<evidence type="ECO:0000255" key="2">
    <source>
        <dbReference type="HAMAP-Rule" id="MF_03051"/>
    </source>
</evidence>
<reference key="1">
    <citation type="journal article" date="2007" name="Nature">
        <title>Evolution of genes and genomes on the Drosophila phylogeny.</title>
        <authorList>
            <consortium name="Drosophila 12 genomes consortium"/>
        </authorList>
    </citation>
    <scope>NUCLEOTIDE SEQUENCE [LARGE SCALE GENOMIC DNA]</scope>
    <source>
        <strain>Tucson 14024-0371.13</strain>
    </source>
</reference>
<feature type="chain" id="PRO_0000369310" description="Molybdopterin synthase sulfur carrier subunit">
    <location>
        <begin position="1"/>
        <end position="90"/>
    </location>
</feature>
<feature type="modified residue" description="1-thioglycine; alternate" evidence="2">
    <location>
        <position position="90"/>
    </location>
</feature>
<feature type="modified residue" description="Glycyl adenylate; alternate" evidence="2">
    <location>
        <position position="90"/>
    </location>
</feature>
<organism>
    <name type="scientific">Drosophila ananassae</name>
    <name type="common">Fruit fly</name>
    <dbReference type="NCBI Taxonomy" id="7217"/>
    <lineage>
        <taxon>Eukaryota</taxon>
        <taxon>Metazoa</taxon>
        <taxon>Ecdysozoa</taxon>
        <taxon>Arthropoda</taxon>
        <taxon>Hexapoda</taxon>
        <taxon>Insecta</taxon>
        <taxon>Pterygota</taxon>
        <taxon>Neoptera</taxon>
        <taxon>Endopterygota</taxon>
        <taxon>Diptera</taxon>
        <taxon>Brachycera</taxon>
        <taxon>Muscomorpha</taxon>
        <taxon>Ephydroidea</taxon>
        <taxon>Drosophilidae</taxon>
        <taxon>Drosophila</taxon>
        <taxon>Sophophora</taxon>
    </lineage>
</organism>
<protein>
    <recommendedName>
        <fullName evidence="2">Molybdopterin synthase sulfur carrier subunit</fullName>
    </recommendedName>
    <alternativeName>
        <fullName evidence="2">Molybdenum cofactor synthesis protein 2 small subunit</fullName>
    </alternativeName>
    <alternativeName>
        <fullName evidence="2">Molybdenum cofactor synthesis protein 2A</fullName>
        <shortName evidence="2">MOCS2A</shortName>
    </alternativeName>
    <alternativeName>
        <fullName evidence="2">Sulfur carrier protein MOCS2A</fullName>
    </alternativeName>
</protein>
<dbReference type="EMBL" id="CH902617">
    <property type="protein sequence ID" value="EDV42260.1"/>
    <property type="molecule type" value="Genomic_DNA"/>
</dbReference>
<dbReference type="RefSeq" id="XP_001953699.1">
    <property type="nucleotide sequence ID" value="XM_001953663.2"/>
</dbReference>
<dbReference type="SMR" id="B3M269"/>
<dbReference type="FunCoup" id="B3M269">
    <property type="interactions" value="14"/>
</dbReference>
<dbReference type="STRING" id="7217.B3M269"/>
<dbReference type="EnsemblMetazoa" id="FBtr0389166">
    <property type="protein sequence ID" value="FBpp0348808"/>
    <property type="gene ID" value="FBgn0094116"/>
</dbReference>
<dbReference type="EnsemblMetazoa" id="XM_044717184.1">
    <property type="protein sequence ID" value="XP_044573119.1"/>
    <property type="gene ID" value="LOC6499885"/>
</dbReference>
<dbReference type="KEGG" id="dan:6499885"/>
<dbReference type="eggNOG" id="KOG3474">
    <property type="taxonomic scope" value="Eukaryota"/>
</dbReference>
<dbReference type="HOGENOM" id="CLU_114601_4_3_1"/>
<dbReference type="InParanoid" id="B3M269"/>
<dbReference type="OMA" id="HVLFFAK"/>
<dbReference type="OrthoDB" id="5531344at2759"/>
<dbReference type="PhylomeDB" id="B3M269"/>
<dbReference type="UniPathway" id="UPA00344"/>
<dbReference type="Proteomes" id="UP000007801">
    <property type="component" value="Unassembled WGS sequence"/>
</dbReference>
<dbReference type="GO" id="GO:0005829">
    <property type="term" value="C:cytosol"/>
    <property type="evidence" value="ECO:0000250"/>
    <property type="project" value="UniProtKB"/>
</dbReference>
<dbReference type="GO" id="GO:1990133">
    <property type="term" value="C:molybdopterin adenylyltransferase complex"/>
    <property type="evidence" value="ECO:0007669"/>
    <property type="project" value="TreeGrafter"/>
</dbReference>
<dbReference type="GO" id="GO:1990140">
    <property type="term" value="C:molybdopterin synthase complex"/>
    <property type="evidence" value="ECO:0000250"/>
    <property type="project" value="UniProtKB"/>
</dbReference>
<dbReference type="GO" id="GO:0030366">
    <property type="term" value="F:molybdopterin synthase activity"/>
    <property type="evidence" value="ECO:0007669"/>
    <property type="project" value="UniProtKB-UniRule"/>
</dbReference>
<dbReference type="GO" id="GO:0000166">
    <property type="term" value="F:nucleotide binding"/>
    <property type="evidence" value="ECO:0007669"/>
    <property type="project" value="UniProtKB-KW"/>
</dbReference>
<dbReference type="GO" id="GO:0006777">
    <property type="term" value="P:Mo-molybdopterin cofactor biosynthetic process"/>
    <property type="evidence" value="ECO:0000250"/>
    <property type="project" value="UniProtKB"/>
</dbReference>
<dbReference type="CDD" id="cd00754">
    <property type="entry name" value="Ubl_MoaD"/>
    <property type="match status" value="1"/>
</dbReference>
<dbReference type="FunFam" id="3.10.20.30:FF:000010">
    <property type="entry name" value="Molybdopterin synthase sulfur carrier subunit"/>
    <property type="match status" value="1"/>
</dbReference>
<dbReference type="Gene3D" id="3.10.20.30">
    <property type="match status" value="1"/>
</dbReference>
<dbReference type="HAMAP" id="MF_03051">
    <property type="entry name" value="MOCS2A"/>
    <property type="match status" value="1"/>
</dbReference>
<dbReference type="InterPro" id="IPR012675">
    <property type="entry name" value="Beta-grasp_dom_sf"/>
</dbReference>
<dbReference type="InterPro" id="IPR044672">
    <property type="entry name" value="MOCS2A"/>
</dbReference>
<dbReference type="InterPro" id="IPR028887">
    <property type="entry name" value="MOCS2A_euk"/>
</dbReference>
<dbReference type="InterPro" id="IPR016155">
    <property type="entry name" value="Mopterin_synth/thiamin_S_b"/>
</dbReference>
<dbReference type="InterPro" id="IPR003749">
    <property type="entry name" value="ThiS/MoaD-like"/>
</dbReference>
<dbReference type="NCBIfam" id="TIGR01682">
    <property type="entry name" value="moaD"/>
    <property type="match status" value="1"/>
</dbReference>
<dbReference type="PANTHER" id="PTHR33359">
    <property type="entry name" value="MOLYBDOPTERIN SYNTHASE SULFUR CARRIER SUBUNIT"/>
    <property type="match status" value="1"/>
</dbReference>
<dbReference type="PANTHER" id="PTHR33359:SF1">
    <property type="entry name" value="MOLYBDOPTERIN SYNTHASE SULFUR CARRIER SUBUNIT"/>
    <property type="match status" value="1"/>
</dbReference>
<dbReference type="Pfam" id="PF02597">
    <property type="entry name" value="ThiS"/>
    <property type="match status" value="1"/>
</dbReference>
<dbReference type="SUPFAM" id="SSF54285">
    <property type="entry name" value="MoaD/ThiS"/>
    <property type="match status" value="1"/>
</dbReference>
<keyword id="KW-0963">Cytoplasm</keyword>
<keyword id="KW-0501">Molybdenum cofactor biosynthesis</keyword>
<keyword id="KW-0547">Nucleotide-binding</keyword>
<keyword id="KW-0597">Phosphoprotein</keyword>
<keyword id="KW-1185">Reference proteome</keyword>
<sequence>MSADGPVVNVHVLFFAKSRELAQTPRSKVDVPSQIVASDLLDQLVTRFDLASIKDNLILAHNESYIENLSDKILFREGDELAVIPPLSGG</sequence>